<dbReference type="EC" id="2.7.7.23" evidence="1"/>
<dbReference type="EC" id="2.3.1.157" evidence="1"/>
<dbReference type="EMBL" id="CP000512">
    <property type="protein sequence ID" value="ABM34580.1"/>
    <property type="molecule type" value="Genomic_DNA"/>
</dbReference>
<dbReference type="RefSeq" id="WP_011797066.1">
    <property type="nucleotide sequence ID" value="NC_008752.1"/>
</dbReference>
<dbReference type="SMR" id="A1TUE2"/>
<dbReference type="STRING" id="397945.Aave_4039"/>
<dbReference type="KEGG" id="aav:Aave_4039"/>
<dbReference type="eggNOG" id="COG1207">
    <property type="taxonomic scope" value="Bacteria"/>
</dbReference>
<dbReference type="HOGENOM" id="CLU_029499_15_2_4"/>
<dbReference type="OrthoDB" id="9775031at2"/>
<dbReference type="UniPathway" id="UPA00113">
    <property type="reaction ID" value="UER00532"/>
</dbReference>
<dbReference type="UniPathway" id="UPA00113">
    <property type="reaction ID" value="UER00533"/>
</dbReference>
<dbReference type="UniPathway" id="UPA00973"/>
<dbReference type="Proteomes" id="UP000002596">
    <property type="component" value="Chromosome"/>
</dbReference>
<dbReference type="GO" id="GO:0005737">
    <property type="term" value="C:cytoplasm"/>
    <property type="evidence" value="ECO:0007669"/>
    <property type="project" value="UniProtKB-SubCell"/>
</dbReference>
<dbReference type="GO" id="GO:0016020">
    <property type="term" value="C:membrane"/>
    <property type="evidence" value="ECO:0007669"/>
    <property type="project" value="GOC"/>
</dbReference>
<dbReference type="GO" id="GO:0019134">
    <property type="term" value="F:glucosamine-1-phosphate N-acetyltransferase activity"/>
    <property type="evidence" value="ECO:0007669"/>
    <property type="project" value="UniProtKB-UniRule"/>
</dbReference>
<dbReference type="GO" id="GO:0000287">
    <property type="term" value="F:magnesium ion binding"/>
    <property type="evidence" value="ECO:0007669"/>
    <property type="project" value="UniProtKB-UniRule"/>
</dbReference>
<dbReference type="GO" id="GO:0003977">
    <property type="term" value="F:UDP-N-acetylglucosamine diphosphorylase activity"/>
    <property type="evidence" value="ECO:0007669"/>
    <property type="project" value="UniProtKB-UniRule"/>
</dbReference>
<dbReference type="GO" id="GO:0000902">
    <property type="term" value="P:cell morphogenesis"/>
    <property type="evidence" value="ECO:0007669"/>
    <property type="project" value="UniProtKB-UniRule"/>
</dbReference>
<dbReference type="GO" id="GO:0071555">
    <property type="term" value="P:cell wall organization"/>
    <property type="evidence" value="ECO:0007669"/>
    <property type="project" value="UniProtKB-KW"/>
</dbReference>
<dbReference type="GO" id="GO:0009245">
    <property type="term" value="P:lipid A biosynthetic process"/>
    <property type="evidence" value="ECO:0007669"/>
    <property type="project" value="UniProtKB-UniRule"/>
</dbReference>
<dbReference type="GO" id="GO:0009252">
    <property type="term" value="P:peptidoglycan biosynthetic process"/>
    <property type="evidence" value="ECO:0007669"/>
    <property type="project" value="UniProtKB-UniRule"/>
</dbReference>
<dbReference type="GO" id="GO:0008360">
    <property type="term" value="P:regulation of cell shape"/>
    <property type="evidence" value="ECO:0007669"/>
    <property type="project" value="UniProtKB-KW"/>
</dbReference>
<dbReference type="GO" id="GO:0006048">
    <property type="term" value="P:UDP-N-acetylglucosamine biosynthetic process"/>
    <property type="evidence" value="ECO:0007669"/>
    <property type="project" value="UniProtKB-UniPathway"/>
</dbReference>
<dbReference type="CDD" id="cd02540">
    <property type="entry name" value="GT2_GlmU_N_bac"/>
    <property type="match status" value="1"/>
</dbReference>
<dbReference type="CDD" id="cd03353">
    <property type="entry name" value="LbH_GlmU_C"/>
    <property type="match status" value="1"/>
</dbReference>
<dbReference type="Gene3D" id="2.160.10.10">
    <property type="entry name" value="Hexapeptide repeat proteins"/>
    <property type="match status" value="1"/>
</dbReference>
<dbReference type="Gene3D" id="3.90.550.10">
    <property type="entry name" value="Spore Coat Polysaccharide Biosynthesis Protein SpsA, Chain A"/>
    <property type="match status" value="1"/>
</dbReference>
<dbReference type="HAMAP" id="MF_01631">
    <property type="entry name" value="GlmU"/>
    <property type="match status" value="1"/>
</dbReference>
<dbReference type="InterPro" id="IPR005882">
    <property type="entry name" value="Bifunctional_GlmU"/>
</dbReference>
<dbReference type="InterPro" id="IPR050065">
    <property type="entry name" value="GlmU-like"/>
</dbReference>
<dbReference type="InterPro" id="IPR038009">
    <property type="entry name" value="GlmU_C_LbH"/>
</dbReference>
<dbReference type="InterPro" id="IPR001451">
    <property type="entry name" value="Hexapep"/>
</dbReference>
<dbReference type="InterPro" id="IPR025877">
    <property type="entry name" value="MobA-like_NTP_Trfase"/>
</dbReference>
<dbReference type="InterPro" id="IPR029044">
    <property type="entry name" value="Nucleotide-diphossugar_trans"/>
</dbReference>
<dbReference type="InterPro" id="IPR011004">
    <property type="entry name" value="Trimer_LpxA-like_sf"/>
</dbReference>
<dbReference type="NCBIfam" id="TIGR01173">
    <property type="entry name" value="glmU"/>
    <property type="match status" value="1"/>
</dbReference>
<dbReference type="PANTHER" id="PTHR43584:SF3">
    <property type="entry name" value="BIFUNCTIONAL PROTEIN GLMU"/>
    <property type="match status" value="1"/>
</dbReference>
<dbReference type="PANTHER" id="PTHR43584">
    <property type="entry name" value="NUCLEOTIDYL TRANSFERASE"/>
    <property type="match status" value="1"/>
</dbReference>
<dbReference type="Pfam" id="PF00132">
    <property type="entry name" value="Hexapep"/>
    <property type="match status" value="1"/>
</dbReference>
<dbReference type="Pfam" id="PF12804">
    <property type="entry name" value="NTP_transf_3"/>
    <property type="match status" value="1"/>
</dbReference>
<dbReference type="SUPFAM" id="SSF53448">
    <property type="entry name" value="Nucleotide-diphospho-sugar transferases"/>
    <property type="match status" value="1"/>
</dbReference>
<dbReference type="SUPFAM" id="SSF51161">
    <property type="entry name" value="Trimeric LpxA-like enzymes"/>
    <property type="match status" value="1"/>
</dbReference>
<reference key="1">
    <citation type="submission" date="2006-12" db="EMBL/GenBank/DDBJ databases">
        <title>Complete sequence of Acidovorax avenae subsp. citrulli AAC00-1.</title>
        <authorList>
            <person name="Copeland A."/>
            <person name="Lucas S."/>
            <person name="Lapidus A."/>
            <person name="Barry K."/>
            <person name="Detter J.C."/>
            <person name="Glavina del Rio T."/>
            <person name="Dalin E."/>
            <person name="Tice H."/>
            <person name="Pitluck S."/>
            <person name="Kiss H."/>
            <person name="Brettin T."/>
            <person name="Bruce D."/>
            <person name="Han C."/>
            <person name="Tapia R."/>
            <person name="Gilna P."/>
            <person name="Schmutz J."/>
            <person name="Larimer F."/>
            <person name="Land M."/>
            <person name="Hauser L."/>
            <person name="Kyrpides N."/>
            <person name="Kim E."/>
            <person name="Stahl D."/>
            <person name="Richardson P."/>
        </authorList>
    </citation>
    <scope>NUCLEOTIDE SEQUENCE [LARGE SCALE GENOMIC DNA]</scope>
    <source>
        <strain>AAC00-1</strain>
    </source>
</reference>
<organism>
    <name type="scientific">Paracidovorax citrulli (strain AAC00-1)</name>
    <name type="common">Acidovorax citrulli</name>
    <dbReference type="NCBI Taxonomy" id="397945"/>
    <lineage>
        <taxon>Bacteria</taxon>
        <taxon>Pseudomonadati</taxon>
        <taxon>Pseudomonadota</taxon>
        <taxon>Betaproteobacteria</taxon>
        <taxon>Burkholderiales</taxon>
        <taxon>Comamonadaceae</taxon>
        <taxon>Paracidovorax</taxon>
    </lineage>
</organism>
<name>GLMU_PARC0</name>
<accession>A1TUE2</accession>
<evidence type="ECO:0000255" key="1">
    <source>
        <dbReference type="HAMAP-Rule" id="MF_01631"/>
    </source>
</evidence>
<evidence type="ECO:0000256" key="2">
    <source>
        <dbReference type="SAM" id="MobiDB-lite"/>
    </source>
</evidence>
<protein>
    <recommendedName>
        <fullName evidence="1">Bifunctional protein GlmU</fullName>
    </recommendedName>
    <domain>
        <recommendedName>
            <fullName evidence="1">UDP-N-acetylglucosamine pyrophosphorylase</fullName>
            <ecNumber evidence="1">2.7.7.23</ecNumber>
        </recommendedName>
        <alternativeName>
            <fullName evidence="1">N-acetylglucosamine-1-phosphate uridyltransferase</fullName>
        </alternativeName>
    </domain>
    <domain>
        <recommendedName>
            <fullName evidence="1">Glucosamine-1-phosphate N-acetyltransferase</fullName>
            <ecNumber evidence="1">2.3.1.157</ecNumber>
        </recommendedName>
    </domain>
</protein>
<comment type="function">
    <text evidence="1">Catalyzes the last two sequential reactions in the de novo biosynthetic pathway for UDP-N-acetylglucosamine (UDP-GlcNAc). The C-terminal domain catalyzes the transfer of acetyl group from acetyl coenzyme A to glucosamine-1-phosphate (GlcN-1-P) to produce N-acetylglucosamine-1-phosphate (GlcNAc-1-P), which is converted into UDP-GlcNAc by the transfer of uridine 5-monophosphate (from uridine 5-triphosphate), a reaction catalyzed by the N-terminal domain.</text>
</comment>
<comment type="catalytic activity">
    <reaction evidence="1">
        <text>alpha-D-glucosamine 1-phosphate + acetyl-CoA = N-acetyl-alpha-D-glucosamine 1-phosphate + CoA + H(+)</text>
        <dbReference type="Rhea" id="RHEA:13725"/>
        <dbReference type="ChEBI" id="CHEBI:15378"/>
        <dbReference type="ChEBI" id="CHEBI:57287"/>
        <dbReference type="ChEBI" id="CHEBI:57288"/>
        <dbReference type="ChEBI" id="CHEBI:57776"/>
        <dbReference type="ChEBI" id="CHEBI:58516"/>
        <dbReference type="EC" id="2.3.1.157"/>
    </reaction>
</comment>
<comment type="catalytic activity">
    <reaction evidence="1">
        <text>N-acetyl-alpha-D-glucosamine 1-phosphate + UTP + H(+) = UDP-N-acetyl-alpha-D-glucosamine + diphosphate</text>
        <dbReference type="Rhea" id="RHEA:13509"/>
        <dbReference type="ChEBI" id="CHEBI:15378"/>
        <dbReference type="ChEBI" id="CHEBI:33019"/>
        <dbReference type="ChEBI" id="CHEBI:46398"/>
        <dbReference type="ChEBI" id="CHEBI:57705"/>
        <dbReference type="ChEBI" id="CHEBI:57776"/>
        <dbReference type="EC" id="2.7.7.23"/>
    </reaction>
</comment>
<comment type="cofactor">
    <cofactor evidence="1">
        <name>Mg(2+)</name>
        <dbReference type="ChEBI" id="CHEBI:18420"/>
    </cofactor>
    <text evidence="1">Binds 1 Mg(2+) ion per subunit.</text>
</comment>
<comment type="pathway">
    <text evidence="1">Nucleotide-sugar biosynthesis; UDP-N-acetyl-alpha-D-glucosamine biosynthesis; N-acetyl-alpha-D-glucosamine 1-phosphate from alpha-D-glucosamine 6-phosphate (route II): step 2/2.</text>
</comment>
<comment type="pathway">
    <text evidence="1">Nucleotide-sugar biosynthesis; UDP-N-acetyl-alpha-D-glucosamine biosynthesis; UDP-N-acetyl-alpha-D-glucosamine from N-acetyl-alpha-D-glucosamine 1-phosphate: step 1/1.</text>
</comment>
<comment type="pathway">
    <text evidence="1">Bacterial outer membrane biogenesis; LPS lipid A biosynthesis.</text>
</comment>
<comment type="subunit">
    <text evidence="1">Homotrimer.</text>
</comment>
<comment type="subcellular location">
    <subcellularLocation>
        <location evidence="1">Cytoplasm</location>
    </subcellularLocation>
</comment>
<comment type="similarity">
    <text evidence="1">In the N-terminal section; belongs to the N-acetylglucosamine-1-phosphate uridyltransferase family.</text>
</comment>
<comment type="similarity">
    <text evidence="1">In the C-terminal section; belongs to the transferase hexapeptide repeat family.</text>
</comment>
<feature type="chain" id="PRO_1000056131" description="Bifunctional protein GlmU">
    <location>
        <begin position="1"/>
        <end position="474"/>
    </location>
</feature>
<feature type="region of interest" description="Pyrophosphorylase" evidence="1">
    <location>
        <begin position="1"/>
        <end position="232"/>
    </location>
</feature>
<feature type="region of interest" description="Linker" evidence="1">
    <location>
        <begin position="233"/>
        <end position="253"/>
    </location>
</feature>
<feature type="region of interest" description="N-acetyltransferase" evidence="1">
    <location>
        <begin position="254"/>
        <end position="474"/>
    </location>
</feature>
<feature type="region of interest" description="Disordered" evidence="2">
    <location>
        <begin position="454"/>
        <end position="474"/>
    </location>
</feature>
<feature type="active site" description="Proton acceptor" evidence="1">
    <location>
        <position position="379"/>
    </location>
</feature>
<feature type="binding site" evidence="1">
    <location>
        <position position="23"/>
    </location>
    <ligand>
        <name>UDP-N-acetyl-alpha-D-glucosamine</name>
        <dbReference type="ChEBI" id="CHEBI:57705"/>
    </ligand>
</feature>
<feature type="binding site" evidence="1">
    <location>
        <position position="78"/>
    </location>
    <ligand>
        <name>UDP-N-acetyl-alpha-D-glucosamine</name>
        <dbReference type="ChEBI" id="CHEBI:57705"/>
    </ligand>
</feature>
<feature type="binding site" evidence="1">
    <location>
        <begin position="83"/>
        <end position="84"/>
    </location>
    <ligand>
        <name>UDP-N-acetyl-alpha-D-glucosamine</name>
        <dbReference type="ChEBI" id="CHEBI:57705"/>
    </ligand>
</feature>
<feature type="binding site" evidence="1">
    <location>
        <begin position="105"/>
        <end position="107"/>
    </location>
    <ligand>
        <name>UDP-N-acetyl-alpha-D-glucosamine</name>
        <dbReference type="ChEBI" id="CHEBI:57705"/>
    </ligand>
</feature>
<feature type="binding site" evidence="1">
    <location>
        <position position="107"/>
    </location>
    <ligand>
        <name>Mg(2+)</name>
        <dbReference type="ChEBI" id="CHEBI:18420"/>
    </ligand>
</feature>
<feature type="binding site" evidence="1">
    <location>
        <position position="142"/>
    </location>
    <ligand>
        <name>UDP-N-acetyl-alpha-D-glucosamine</name>
        <dbReference type="ChEBI" id="CHEBI:57705"/>
    </ligand>
</feature>
<feature type="binding site" evidence="1">
    <location>
        <position position="157"/>
    </location>
    <ligand>
        <name>UDP-N-acetyl-alpha-D-glucosamine</name>
        <dbReference type="ChEBI" id="CHEBI:57705"/>
    </ligand>
</feature>
<feature type="binding site" evidence="1">
    <location>
        <position position="230"/>
    </location>
    <ligand>
        <name>Mg(2+)</name>
        <dbReference type="ChEBI" id="CHEBI:18420"/>
    </ligand>
</feature>
<feature type="binding site" evidence="1">
    <location>
        <position position="230"/>
    </location>
    <ligand>
        <name>UDP-N-acetyl-alpha-D-glucosamine</name>
        <dbReference type="ChEBI" id="CHEBI:57705"/>
    </ligand>
</feature>
<feature type="binding site" evidence="1">
    <location>
        <position position="349"/>
    </location>
    <ligand>
        <name>UDP-N-acetyl-alpha-D-glucosamine</name>
        <dbReference type="ChEBI" id="CHEBI:57705"/>
    </ligand>
</feature>
<feature type="binding site" evidence="1">
    <location>
        <position position="367"/>
    </location>
    <ligand>
        <name>UDP-N-acetyl-alpha-D-glucosamine</name>
        <dbReference type="ChEBI" id="CHEBI:57705"/>
    </ligand>
</feature>
<feature type="binding site" evidence="1">
    <location>
        <position position="382"/>
    </location>
    <ligand>
        <name>UDP-N-acetyl-alpha-D-glucosamine</name>
        <dbReference type="ChEBI" id="CHEBI:57705"/>
    </ligand>
</feature>
<feature type="binding site" evidence="1">
    <location>
        <position position="393"/>
    </location>
    <ligand>
        <name>UDP-N-acetyl-alpha-D-glucosamine</name>
        <dbReference type="ChEBI" id="CHEBI:57705"/>
    </ligand>
</feature>
<feature type="binding site" evidence="1">
    <location>
        <position position="396"/>
    </location>
    <ligand>
        <name>acetyl-CoA</name>
        <dbReference type="ChEBI" id="CHEBI:57288"/>
    </ligand>
</feature>
<feature type="binding site" evidence="1">
    <location>
        <begin position="402"/>
        <end position="403"/>
    </location>
    <ligand>
        <name>acetyl-CoA</name>
        <dbReference type="ChEBI" id="CHEBI:57288"/>
    </ligand>
</feature>
<feature type="binding site" evidence="1">
    <location>
        <position position="421"/>
    </location>
    <ligand>
        <name>acetyl-CoA</name>
        <dbReference type="ChEBI" id="CHEBI:57288"/>
    </ligand>
</feature>
<feature type="binding site" evidence="1">
    <location>
        <position position="439"/>
    </location>
    <ligand>
        <name>acetyl-CoA</name>
        <dbReference type="ChEBI" id="CHEBI:57288"/>
    </ligand>
</feature>
<feature type="binding site" evidence="1">
    <location>
        <position position="456"/>
    </location>
    <ligand>
        <name>acetyl-CoA</name>
        <dbReference type="ChEBI" id="CHEBI:57288"/>
    </ligand>
</feature>
<keyword id="KW-0012">Acyltransferase</keyword>
<keyword id="KW-0133">Cell shape</keyword>
<keyword id="KW-0961">Cell wall biogenesis/degradation</keyword>
<keyword id="KW-0963">Cytoplasm</keyword>
<keyword id="KW-0460">Magnesium</keyword>
<keyword id="KW-0479">Metal-binding</keyword>
<keyword id="KW-0511">Multifunctional enzyme</keyword>
<keyword id="KW-0548">Nucleotidyltransferase</keyword>
<keyword id="KW-0573">Peptidoglycan synthesis</keyword>
<keyword id="KW-0677">Repeat</keyword>
<keyword id="KW-0808">Transferase</keyword>
<gene>
    <name evidence="1" type="primary">glmU</name>
    <name type="ordered locus">Aave_4039</name>
</gene>
<proteinExistence type="inferred from homology"/>
<sequence length="474" mass="49098">MSALDVIIMAAGKGTRMKSRIPKVLQRLAGRPLLGHVLDQARGLQARRAVVVTGHGAAEVEPFIARAADGLDVRCVRQEPQLGTGHAVQQAVPALQGDGTVIVLSGDVPLTRTDTLRALVAAGGGGQLALLTVTLPDPAGYGRIVRGSDGAVRGIVEHKDATEAQRAIDEVYSGIMAVPAGLLAGWLARLTNDNAQGEYYLTDIVAMAVADGVPVVAHRIADALQVAGVNSPLQLAELERAHQLAQARALMEQGVRLADPARFDLRDDARTGVRGELACGQDVEIDVNCIFSGRVELGEGVRIGAHCCIANARIAAGAVVHPYTHIDGEQPAGVQVGEGALVGPFARLRPGAQLGREVHIGNFVEVKNSSLAEGAKANHLAYLGDATVGERVNYGAGSITANYDGANKHRTVIEADVHVGSNCVLVAPVTIGAGGTVGGGSTITKSTPAGALSVARGKQVTKENWQRPAKLPKA</sequence>